<gene>
    <name evidence="1" type="primary">gluQ</name>
    <name type="ordered locus">SCH_0185</name>
</gene>
<comment type="function">
    <text evidence="1">Catalyzes the tRNA-independent activation of glutamate in presence of ATP and the subsequent transfer of glutamate onto a tRNA(Asp). Glutamate is transferred on the 2-amino-5-(4,5-dihydroxy-2-cyclopenten-1-yl) moiety of the queuosine in the wobble position of the QUC anticodon.</text>
</comment>
<comment type="cofactor">
    <cofactor evidence="1">
        <name>Zn(2+)</name>
        <dbReference type="ChEBI" id="CHEBI:29105"/>
    </cofactor>
    <text evidence="1">Binds 1 zinc ion per subunit.</text>
</comment>
<comment type="similarity">
    <text evidence="1">Belongs to the class-I aminoacyl-tRNA synthetase family. GluQ subfamily.</text>
</comment>
<comment type="sequence caution" evidence="2">
    <conflict type="erroneous initiation">
        <sequence resource="EMBL-CDS" id="AAX64091"/>
    </conflict>
</comment>
<dbReference type="EC" id="6.1.1.-" evidence="1"/>
<dbReference type="EMBL" id="AE017220">
    <property type="protein sequence ID" value="AAX64091.1"/>
    <property type="status" value="ALT_INIT"/>
    <property type="molecule type" value="Genomic_DNA"/>
</dbReference>
<dbReference type="SMR" id="Q57T70"/>
<dbReference type="KEGG" id="sec:SCH_0185"/>
<dbReference type="HOGENOM" id="CLU_015768_0_1_6"/>
<dbReference type="Proteomes" id="UP000000538">
    <property type="component" value="Chromosome"/>
</dbReference>
<dbReference type="GO" id="GO:0005829">
    <property type="term" value="C:cytosol"/>
    <property type="evidence" value="ECO:0007669"/>
    <property type="project" value="TreeGrafter"/>
</dbReference>
<dbReference type="GO" id="GO:0005524">
    <property type="term" value="F:ATP binding"/>
    <property type="evidence" value="ECO:0007669"/>
    <property type="project" value="UniProtKB-KW"/>
</dbReference>
<dbReference type="GO" id="GO:0004818">
    <property type="term" value="F:glutamate-tRNA ligase activity"/>
    <property type="evidence" value="ECO:0007669"/>
    <property type="project" value="TreeGrafter"/>
</dbReference>
<dbReference type="GO" id="GO:0008270">
    <property type="term" value="F:zinc ion binding"/>
    <property type="evidence" value="ECO:0007669"/>
    <property type="project" value="UniProtKB-UniRule"/>
</dbReference>
<dbReference type="GO" id="GO:0006424">
    <property type="term" value="P:glutamyl-tRNA aminoacylation"/>
    <property type="evidence" value="ECO:0007669"/>
    <property type="project" value="InterPro"/>
</dbReference>
<dbReference type="GO" id="GO:0006400">
    <property type="term" value="P:tRNA modification"/>
    <property type="evidence" value="ECO:0007669"/>
    <property type="project" value="InterPro"/>
</dbReference>
<dbReference type="FunFam" id="3.40.50.620:FF:000093">
    <property type="entry name" value="Glutamyl-Q tRNA(Asp) synthetase"/>
    <property type="match status" value="1"/>
</dbReference>
<dbReference type="Gene3D" id="3.40.50.620">
    <property type="entry name" value="HUPs"/>
    <property type="match status" value="1"/>
</dbReference>
<dbReference type="HAMAP" id="MF_01428">
    <property type="entry name" value="Glu_Q_tRNA_synth"/>
    <property type="match status" value="1"/>
</dbReference>
<dbReference type="InterPro" id="IPR022380">
    <property type="entry name" value="Glu-Q_tRNA(Asp)_Synthase"/>
</dbReference>
<dbReference type="InterPro" id="IPR000924">
    <property type="entry name" value="Glu/Gln-tRNA-synth"/>
</dbReference>
<dbReference type="InterPro" id="IPR020058">
    <property type="entry name" value="Glu/Gln-tRNA-synth_Ib_cat-dom"/>
</dbReference>
<dbReference type="InterPro" id="IPR049940">
    <property type="entry name" value="GluQ/Sye"/>
</dbReference>
<dbReference type="InterPro" id="IPR014729">
    <property type="entry name" value="Rossmann-like_a/b/a_fold"/>
</dbReference>
<dbReference type="NCBIfam" id="NF004312">
    <property type="entry name" value="PRK05710.1-1"/>
    <property type="match status" value="1"/>
</dbReference>
<dbReference type="NCBIfam" id="NF004314">
    <property type="entry name" value="PRK05710.1-3"/>
    <property type="match status" value="1"/>
</dbReference>
<dbReference type="NCBIfam" id="TIGR03838">
    <property type="entry name" value="queuosine_YadB"/>
    <property type="match status" value="1"/>
</dbReference>
<dbReference type="PANTHER" id="PTHR43311">
    <property type="entry name" value="GLUTAMATE--TRNA LIGASE"/>
    <property type="match status" value="1"/>
</dbReference>
<dbReference type="PANTHER" id="PTHR43311:SF1">
    <property type="entry name" value="GLUTAMYL-Q TRNA(ASP) SYNTHETASE"/>
    <property type="match status" value="1"/>
</dbReference>
<dbReference type="Pfam" id="PF00749">
    <property type="entry name" value="tRNA-synt_1c"/>
    <property type="match status" value="1"/>
</dbReference>
<dbReference type="PRINTS" id="PR00987">
    <property type="entry name" value="TRNASYNTHGLU"/>
</dbReference>
<dbReference type="SUPFAM" id="SSF52374">
    <property type="entry name" value="Nucleotidylyl transferase"/>
    <property type="match status" value="1"/>
</dbReference>
<accession>Q57T70</accession>
<protein>
    <recommendedName>
        <fullName evidence="1">Glutamyl-Q tRNA(Asp) synthetase</fullName>
        <shortName evidence="1">Glu-Q-RSs</shortName>
        <ecNumber evidence="1">6.1.1.-</ecNumber>
    </recommendedName>
</protein>
<reference key="1">
    <citation type="journal article" date="2005" name="Nucleic Acids Res.">
        <title>The genome sequence of Salmonella enterica serovar Choleraesuis, a highly invasive and resistant zoonotic pathogen.</title>
        <authorList>
            <person name="Chiu C.-H."/>
            <person name="Tang P."/>
            <person name="Chu C."/>
            <person name="Hu S."/>
            <person name="Bao Q."/>
            <person name="Yu J."/>
            <person name="Chou Y.-Y."/>
            <person name="Wang H.-S."/>
            <person name="Lee Y.-S."/>
        </authorList>
    </citation>
    <scope>NUCLEOTIDE SEQUENCE [LARGE SCALE GENOMIC DNA]</scope>
    <source>
        <strain>SC-B67</strain>
    </source>
</reference>
<feature type="chain" id="PRO_0000208322" description="Glutamyl-Q tRNA(Asp) synthetase">
    <location>
        <begin position="1"/>
        <end position="298"/>
    </location>
</feature>
<feature type="short sequence motif" description="'HIGH' region">
    <location>
        <begin position="12"/>
        <end position="22"/>
    </location>
</feature>
<feature type="short sequence motif" description="'KMSKS' region">
    <location>
        <begin position="228"/>
        <end position="232"/>
    </location>
</feature>
<feature type="binding site" evidence="1">
    <location>
        <begin position="9"/>
        <end position="13"/>
    </location>
    <ligand>
        <name>L-glutamate</name>
        <dbReference type="ChEBI" id="CHEBI:29985"/>
    </ligand>
</feature>
<feature type="binding site" evidence="1">
    <location>
        <position position="45"/>
    </location>
    <ligand>
        <name>L-glutamate</name>
        <dbReference type="ChEBI" id="CHEBI:29985"/>
    </ligand>
</feature>
<feature type="binding site" evidence="1">
    <location>
        <position position="101"/>
    </location>
    <ligand>
        <name>Zn(2+)</name>
        <dbReference type="ChEBI" id="CHEBI:29105"/>
    </ligand>
</feature>
<feature type="binding site" evidence="1">
    <location>
        <position position="103"/>
    </location>
    <ligand>
        <name>Zn(2+)</name>
        <dbReference type="ChEBI" id="CHEBI:29105"/>
    </ligand>
</feature>
<feature type="binding site" evidence="1">
    <location>
        <position position="115"/>
    </location>
    <ligand>
        <name>Zn(2+)</name>
        <dbReference type="ChEBI" id="CHEBI:29105"/>
    </ligand>
</feature>
<feature type="binding site" evidence="1">
    <location>
        <position position="119"/>
    </location>
    <ligand>
        <name>Zn(2+)</name>
        <dbReference type="ChEBI" id="CHEBI:29105"/>
    </ligand>
</feature>
<feature type="binding site" evidence="1">
    <location>
        <position position="172"/>
    </location>
    <ligand>
        <name>L-glutamate</name>
        <dbReference type="ChEBI" id="CHEBI:29985"/>
    </ligand>
</feature>
<feature type="binding site" evidence="1">
    <location>
        <position position="190"/>
    </location>
    <ligand>
        <name>L-glutamate</name>
        <dbReference type="ChEBI" id="CHEBI:29985"/>
    </ligand>
</feature>
<feature type="binding site" evidence="1">
    <location>
        <position position="231"/>
    </location>
    <ligand>
        <name>ATP</name>
        <dbReference type="ChEBI" id="CHEBI:30616"/>
    </ligand>
</feature>
<evidence type="ECO:0000255" key="1">
    <source>
        <dbReference type="HAMAP-Rule" id="MF_01428"/>
    </source>
</evidence>
<evidence type="ECO:0000305" key="2"/>
<proteinExistence type="inferred from homology"/>
<keyword id="KW-0030">Aminoacyl-tRNA synthetase</keyword>
<keyword id="KW-0067">ATP-binding</keyword>
<keyword id="KW-0436">Ligase</keyword>
<keyword id="KW-0479">Metal-binding</keyword>
<keyword id="KW-0547">Nucleotide-binding</keyword>
<keyword id="KW-0862">Zinc</keyword>
<organism>
    <name type="scientific">Salmonella choleraesuis (strain SC-B67)</name>
    <dbReference type="NCBI Taxonomy" id="321314"/>
    <lineage>
        <taxon>Bacteria</taxon>
        <taxon>Pseudomonadati</taxon>
        <taxon>Pseudomonadota</taxon>
        <taxon>Gammaproteobacteria</taxon>
        <taxon>Enterobacterales</taxon>
        <taxon>Enterobacteriaceae</taxon>
        <taxon>Salmonella</taxon>
    </lineage>
</organism>
<sequence length="298" mass="33514">MTDSHYIGRFAPSPSGELHFGSLIAALGSYLQARAQRGIWRVRIEDIDPPREVPGAAATILRQLEHYGLHWDGEVLWQSQRHEAYCEALAWLHEQGLSYYCTCPRSRIQRLGGIYDGHCRTLCHGPENAAVRIKQQHPVMHFHDALRGDIQADPQLASEDFIIHRRDGLFAYNLAVVVDDHFQGVTEIVRGADLIEPTVRQLSLYKQFGWRAPGYVHLPLALNEQGAKLSKQNHAPALATGDPRPVLVQALRFLGQRDVVAWQEMSVEELLRFAVAHWRLTAVPTSANVNPAFSNASR</sequence>
<name>GLUQ_SALCH</name>